<gene>
    <name type="primary">RAG2</name>
    <name type="synonym">RA14</name>
    <name type="ordered locus">Os07g0214300</name>
    <name type="ordered locus">LOC_Os07g11380</name>
    <name type="ORF">OJ1116_C08.114</name>
    <name evidence="6" type="ORF">OsJ_23551</name>
</gene>
<sequence length="166" mass="17865">MASNKVVFSALLLIIVSVLAATATMADHHKDQVVYSLGERCQPGMGYPMYSLPRCRAVVKRQCVGHGAPGGAVDEQLRQDCCRQLAAVDDSWCRCSALNHMVGGIYRELGATDVGHPMAEVFPGCRRGDLERAAASLPAFCNVDIPNGTGGVCYWLGYPRTPRTGH</sequence>
<reference key="1">
    <citation type="journal article" date="1993" name="Plant Mol. Biol.">
        <title>Gene structure and expression of rice seed allergenic proteins belonging to the alpha-amylase/trypsin inhibitor family.</title>
        <authorList>
            <person name="Adachi T."/>
            <person name="Izumi H."/>
            <person name="Yamada T."/>
            <person name="Tanaka K."/>
            <person name="Takeuchi S."/>
            <person name="Nakamura R."/>
            <person name="Matsuda T."/>
        </authorList>
    </citation>
    <scope>NUCLEOTIDE SEQUENCE [GENOMIC DNA / MRNA]</scope>
    <source>
        <strain>cv. Nipponbare</strain>
        <tissue>Seed</tissue>
    </source>
</reference>
<reference key="2">
    <citation type="journal article" date="1995" name="Biochim. Biophys. Acta">
        <title>Classification of rice allergenic protein cDNAs belonging to the alpha-amylase/trypsin inhibitor gene family.</title>
        <authorList>
            <person name="Alvarez A.M."/>
            <person name="Adachi T."/>
            <person name="Nakase M."/>
            <person name="Aoki N."/>
            <person name="Nakamura R."/>
            <person name="Matsuda T."/>
        </authorList>
    </citation>
    <scope>NUCLEOTIDE SEQUENCE [MRNA]</scope>
    <source>
        <strain>cv. Nipponbare</strain>
        <tissue>Endosperm</tissue>
    </source>
</reference>
<reference key="3">
    <citation type="submission" date="1991-09" db="EMBL/GenBank/DDBJ databases">
        <title>A cDNA clone that encodes rice low molecular weight globulin.</title>
        <authorList>
            <person name="Wen L."/>
            <person name="Pan J."/>
            <person name="Huang J.K."/>
            <person name="Johnson B.H."/>
            <person name="Wang C.S."/>
            <person name="Chen M.S."/>
            <person name="Muthukrishnon S."/>
            <person name="Reeck G.R."/>
        </authorList>
    </citation>
    <scope>NUCLEOTIDE SEQUENCE [MRNA]</scope>
    <source>
        <tissue>Endosperm</tissue>
    </source>
</reference>
<reference key="4">
    <citation type="submission" date="2006-11" db="EMBL/GenBank/DDBJ databases">
        <title>Molecular cloning of allergen RAG2 genes in rice seeds.</title>
        <authorList>
            <person name="Yoon U.H."/>
            <person name="Kim Y.H."/>
        </authorList>
    </citation>
    <scope>NUCLEOTIDE SEQUENCE [MRNA]</scope>
    <source>
        <strain>cv. Ilpoombyeo</strain>
        <tissue>Seed</tissue>
    </source>
</reference>
<reference key="5">
    <citation type="journal article" date="2005" name="Nature">
        <title>The map-based sequence of the rice genome.</title>
        <authorList>
            <consortium name="International rice genome sequencing project (IRGSP)"/>
        </authorList>
    </citation>
    <scope>NUCLEOTIDE SEQUENCE [LARGE SCALE GENOMIC DNA]</scope>
    <source>
        <strain>cv. Nipponbare</strain>
    </source>
</reference>
<reference key="6">
    <citation type="journal article" date="2008" name="Nucleic Acids Res.">
        <title>The rice annotation project database (RAP-DB): 2008 update.</title>
        <authorList>
            <consortium name="The rice annotation project (RAP)"/>
        </authorList>
    </citation>
    <scope>GENOME REANNOTATION</scope>
    <source>
        <strain>cv. Nipponbare</strain>
    </source>
</reference>
<reference key="7">
    <citation type="journal article" date="2013" name="Rice">
        <title>Improvement of the Oryza sativa Nipponbare reference genome using next generation sequence and optical map data.</title>
        <authorList>
            <person name="Kawahara Y."/>
            <person name="de la Bastide M."/>
            <person name="Hamilton J.P."/>
            <person name="Kanamori H."/>
            <person name="McCombie W.R."/>
            <person name="Ouyang S."/>
            <person name="Schwartz D.C."/>
            <person name="Tanaka T."/>
            <person name="Wu J."/>
            <person name="Zhou S."/>
            <person name="Childs K.L."/>
            <person name="Davidson R.M."/>
            <person name="Lin H."/>
            <person name="Quesada-Ocampo L."/>
            <person name="Vaillancourt B."/>
            <person name="Sakai H."/>
            <person name="Lee S.S."/>
            <person name="Kim J."/>
            <person name="Numa H."/>
            <person name="Itoh T."/>
            <person name="Buell C.R."/>
            <person name="Matsumoto T."/>
        </authorList>
    </citation>
    <scope>GENOME REANNOTATION</scope>
    <source>
        <strain>cv. Nipponbare</strain>
    </source>
</reference>
<reference key="8">
    <citation type="journal article" date="2005" name="PLoS Biol.">
        <title>The genomes of Oryza sativa: a history of duplications.</title>
        <authorList>
            <person name="Yu J."/>
            <person name="Wang J."/>
            <person name="Lin W."/>
            <person name="Li S."/>
            <person name="Li H."/>
            <person name="Zhou J."/>
            <person name="Ni P."/>
            <person name="Dong W."/>
            <person name="Hu S."/>
            <person name="Zeng C."/>
            <person name="Zhang J."/>
            <person name="Zhang Y."/>
            <person name="Li R."/>
            <person name="Xu Z."/>
            <person name="Li S."/>
            <person name="Li X."/>
            <person name="Zheng H."/>
            <person name="Cong L."/>
            <person name="Lin L."/>
            <person name="Yin J."/>
            <person name="Geng J."/>
            <person name="Li G."/>
            <person name="Shi J."/>
            <person name="Liu J."/>
            <person name="Lv H."/>
            <person name="Li J."/>
            <person name="Wang J."/>
            <person name="Deng Y."/>
            <person name="Ran L."/>
            <person name="Shi X."/>
            <person name="Wang X."/>
            <person name="Wu Q."/>
            <person name="Li C."/>
            <person name="Ren X."/>
            <person name="Wang J."/>
            <person name="Wang X."/>
            <person name="Li D."/>
            <person name="Liu D."/>
            <person name="Zhang X."/>
            <person name="Ji Z."/>
            <person name="Zhao W."/>
            <person name="Sun Y."/>
            <person name="Zhang Z."/>
            <person name="Bao J."/>
            <person name="Han Y."/>
            <person name="Dong L."/>
            <person name="Ji J."/>
            <person name="Chen P."/>
            <person name="Wu S."/>
            <person name="Liu J."/>
            <person name="Xiao Y."/>
            <person name="Bu D."/>
            <person name="Tan J."/>
            <person name="Yang L."/>
            <person name="Ye C."/>
            <person name="Zhang J."/>
            <person name="Xu J."/>
            <person name="Zhou Y."/>
            <person name="Yu Y."/>
            <person name="Zhang B."/>
            <person name="Zhuang S."/>
            <person name="Wei H."/>
            <person name="Liu B."/>
            <person name="Lei M."/>
            <person name="Yu H."/>
            <person name="Li Y."/>
            <person name="Xu H."/>
            <person name="Wei S."/>
            <person name="He X."/>
            <person name="Fang L."/>
            <person name="Zhang Z."/>
            <person name="Zhang Y."/>
            <person name="Huang X."/>
            <person name="Su Z."/>
            <person name="Tong W."/>
            <person name="Li J."/>
            <person name="Tong Z."/>
            <person name="Li S."/>
            <person name="Ye J."/>
            <person name="Wang L."/>
            <person name="Fang L."/>
            <person name="Lei T."/>
            <person name="Chen C.-S."/>
            <person name="Chen H.-C."/>
            <person name="Xu Z."/>
            <person name="Li H."/>
            <person name="Huang H."/>
            <person name="Zhang F."/>
            <person name="Xu H."/>
            <person name="Li N."/>
            <person name="Zhao C."/>
            <person name="Li S."/>
            <person name="Dong L."/>
            <person name="Huang Y."/>
            <person name="Li L."/>
            <person name="Xi Y."/>
            <person name="Qi Q."/>
            <person name="Li W."/>
            <person name="Zhang B."/>
            <person name="Hu W."/>
            <person name="Zhang Y."/>
            <person name="Tian X."/>
            <person name="Jiao Y."/>
            <person name="Liang X."/>
            <person name="Jin J."/>
            <person name="Gao L."/>
            <person name="Zheng W."/>
            <person name="Hao B."/>
            <person name="Liu S.-M."/>
            <person name="Wang W."/>
            <person name="Yuan L."/>
            <person name="Cao M."/>
            <person name="McDermott J."/>
            <person name="Samudrala R."/>
            <person name="Wang J."/>
            <person name="Wong G.K.-S."/>
            <person name="Yang H."/>
        </authorList>
    </citation>
    <scope>NUCLEOTIDE SEQUENCE [LARGE SCALE GENOMIC DNA]</scope>
    <source>
        <strain>cv. Nipponbare</strain>
    </source>
</reference>
<reference key="9">
    <citation type="journal article" date="2003" name="Science">
        <title>Collection, mapping, and annotation of over 28,000 cDNA clones from japonica rice.</title>
        <authorList>
            <consortium name="The rice full-length cDNA consortium"/>
        </authorList>
    </citation>
    <scope>NUCLEOTIDE SEQUENCE [LARGE SCALE MRNA]</scope>
    <source>
        <strain>cv. Nipponbare</strain>
    </source>
</reference>
<reference key="10">
    <citation type="journal article" date="2011" name="Regul. Toxicol. Pharmacol.">
        <title>Proteomic analysis of known and candidate rice allergens between non-transgenic and transgenic plants.</title>
        <authorList>
            <person name="Satoh R."/>
            <person name="Nakamura R."/>
            <person name="Komatsu A."/>
            <person name="Oshima M."/>
            <person name="Teshima R."/>
        </authorList>
    </citation>
    <scope>IDENTIFICATION BY MASS SPECTROMETRY</scope>
    <scope>ALLERGEN</scope>
</reference>
<name>RAG2_ORYSJ</name>
<evidence type="ECO:0000250" key="1">
    <source>
        <dbReference type="UniProtKB" id="Q01883"/>
    </source>
</evidence>
<evidence type="ECO:0000255" key="2"/>
<evidence type="ECO:0000255" key="3">
    <source>
        <dbReference type="PROSITE-ProRule" id="PRU00498"/>
    </source>
</evidence>
<evidence type="ECO:0000269" key="4">
    <source>
    </source>
</evidence>
<evidence type="ECO:0000305" key="5"/>
<evidence type="ECO:0000312" key="6">
    <source>
        <dbReference type="EMBL" id="EAZ39123.1"/>
    </source>
</evidence>
<feature type="signal peptide" evidence="2">
    <location>
        <begin position="1"/>
        <end position="26"/>
    </location>
</feature>
<feature type="chain" id="PRO_0000014360" description="Seed allergenic protein RAG2">
    <location>
        <begin position="27"/>
        <end position="166"/>
    </location>
</feature>
<feature type="glycosylation site" description="N-linked (GlcNAc...) asparagine" evidence="3">
    <location>
        <position position="147"/>
    </location>
</feature>
<feature type="disulfide bond" description="Or C-41 with C-95" evidence="1">
    <location>
        <begin position="41"/>
        <end position="93"/>
    </location>
</feature>
<feature type="disulfide bond" description="Or C-55 with C-82" evidence="1">
    <location>
        <begin position="55"/>
        <end position="81"/>
    </location>
</feature>
<feature type="disulfide bond" evidence="1">
    <location>
        <begin position="63"/>
        <end position="125"/>
    </location>
</feature>
<feature type="disulfide bond" description="Or C-81 with C-141" evidence="1">
    <location>
        <begin position="82"/>
        <end position="141"/>
    </location>
</feature>
<feature type="disulfide bond" description="Or C-93 with C-153" evidence="1">
    <location>
        <begin position="95"/>
        <end position="153"/>
    </location>
</feature>
<feature type="sequence conflict" description="In Ref. 3; CAA44001." evidence="5" ref="3">
    <original>AATA</original>
    <variation>RRDG</variation>
    <location>
        <begin position="20"/>
        <end position="23"/>
    </location>
</feature>
<feature type="sequence conflict" description="In Ref. 1; BAA01998 and 2; BAA07710." evidence="5" ref="1 2">
    <original>AT</original>
    <variation>TR</variation>
    <location>
        <begin position="23"/>
        <end position="24"/>
    </location>
</feature>
<feature type="sequence conflict" description="In Ref. 1; BAA01998." evidence="5" ref="1">
    <original>HGA</original>
    <variation>TRS</variation>
    <location>
        <begin position="66"/>
        <end position="68"/>
    </location>
</feature>
<feature type="sequence conflict" description="In Ref. 1; BAA01998 and 3; CAA44001." evidence="5" ref="1 3">
    <location>
        <position position="71"/>
    </location>
</feature>
<feature type="sequence conflict" description="In Ref. 1; BAA01998." evidence="5" ref="1">
    <original>R</original>
    <variation>A</variation>
    <location>
        <position position="78"/>
    </location>
</feature>
<feature type="sequence conflict" description="In Ref. 1; BAA01998." evidence="5" ref="1">
    <original>Q</original>
    <variation>E</variation>
    <location>
        <position position="84"/>
    </location>
</feature>
<proteinExistence type="evidence at protein level"/>
<comment type="function">
    <text evidence="5">Seed storage protein.</text>
</comment>
<comment type="subcellular location">
    <subcellularLocation>
        <location evidence="5">Secreted</location>
    </subcellularLocation>
</comment>
<comment type="PTM">
    <text evidence="1">Five disulfide bonds are present.</text>
</comment>
<comment type="allergen">
    <text evidence="4">Causes an allergic reaction in human. Binds to IgE.</text>
</comment>
<comment type="similarity">
    <text evidence="5">Belongs to the cereal trypsin/alpha-amylase inhibitor family.</text>
</comment>
<comment type="sequence caution" evidence="5">
    <conflict type="frameshift">
        <sequence resource="EMBL-CDS" id="BAA07710"/>
    </conflict>
</comment>
<accession>Q01882</accession>
<accession>Q01885</accession>
<accession>Q0D7S4</accession>
<accession>Q40652</accession>
<accession>Q7F174</accession>
<accession>Q9ST74</accession>
<protein>
    <recommendedName>
        <fullName>Seed allergenic protein RAG2</fullName>
    </recommendedName>
    <alternativeName>
        <fullName>Seed allergenic protein RA14</fullName>
    </alternativeName>
    <allergenName>Ory s aA_TI</allergenName>
</protein>
<organism>
    <name type="scientific">Oryza sativa subsp. japonica</name>
    <name type="common">Rice</name>
    <dbReference type="NCBI Taxonomy" id="39947"/>
    <lineage>
        <taxon>Eukaryota</taxon>
        <taxon>Viridiplantae</taxon>
        <taxon>Streptophyta</taxon>
        <taxon>Embryophyta</taxon>
        <taxon>Tracheophyta</taxon>
        <taxon>Spermatophyta</taxon>
        <taxon>Magnoliopsida</taxon>
        <taxon>Liliopsida</taxon>
        <taxon>Poales</taxon>
        <taxon>Poaceae</taxon>
        <taxon>BOP clade</taxon>
        <taxon>Oryzoideae</taxon>
        <taxon>Oryzeae</taxon>
        <taxon>Oryzinae</taxon>
        <taxon>Oryza</taxon>
        <taxon>Oryza sativa</taxon>
    </lineage>
</organism>
<dbReference type="EMBL" id="D11432">
    <property type="protein sequence ID" value="BAA01998.1"/>
    <property type="molecule type" value="mRNA"/>
</dbReference>
<dbReference type="EMBL" id="D11434">
    <property type="protein sequence ID" value="BAA02000.1"/>
    <property type="molecule type" value="Genomic_DNA"/>
</dbReference>
<dbReference type="EMBL" id="D42139">
    <property type="protein sequence ID" value="BAA07710.1"/>
    <property type="status" value="ALT_FRAME"/>
    <property type="molecule type" value="mRNA"/>
</dbReference>
<dbReference type="EMBL" id="EF122493">
    <property type="protein sequence ID" value="ABL74580.1"/>
    <property type="molecule type" value="mRNA"/>
</dbReference>
<dbReference type="EMBL" id="X62091">
    <property type="protein sequence ID" value="CAA44001.1"/>
    <property type="molecule type" value="mRNA"/>
</dbReference>
<dbReference type="EMBL" id="AP004002">
    <property type="protein sequence ID" value="BAC20654.1"/>
    <property type="molecule type" value="Genomic_DNA"/>
</dbReference>
<dbReference type="EMBL" id="AP008213">
    <property type="protein sequence ID" value="BAF21099.1"/>
    <property type="molecule type" value="Genomic_DNA"/>
</dbReference>
<dbReference type="EMBL" id="AP014963">
    <property type="protein sequence ID" value="BAT00618.1"/>
    <property type="molecule type" value="Genomic_DNA"/>
</dbReference>
<dbReference type="EMBL" id="CM000144">
    <property type="protein sequence ID" value="EAZ39123.1"/>
    <property type="molecule type" value="Genomic_DNA"/>
</dbReference>
<dbReference type="EMBL" id="AK107328">
    <property type="status" value="NOT_ANNOTATED_CDS"/>
    <property type="molecule type" value="mRNA"/>
</dbReference>
<dbReference type="PIR" id="S31080">
    <property type="entry name" value="S31080"/>
</dbReference>
<dbReference type="PIR" id="S31082">
    <property type="entry name" value="S31082"/>
</dbReference>
<dbReference type="PIR" id="S59922">
    <property type="entry name" value="S59922"/>
</dbReference>
<dbReference type="SMR" id="Q01882"/>
<dbReference type="FunCoup" id="Q01882">
    <property type="interactions" value="169"/>
</dbReference>
<dbReference type="Allergome" id="1049">
    <property type="allergen name" value="Ory s aA_TI"/>
</dbReference>
<dbReference type="GlyCosmos" id="Q01882">
    <property type="glycosylation" value="1 site, No reported glycans"/>
</dbReference>
<dbReference type="PaxDb" id="39947-Q01882"/>
<dbReference type="EnsemblPlants" id="Os07t0214300-01">
    <property type="protein sequence ID" value="Os07t0214300-01"/>
    <property type="gene ID" value="Os07g0214300"/>
</dbReference>
<dbReference type="Gramene" id="Os07t0214300-01">
    <property type="protein sequence ID" value="Os07t0214300-01"/>
    <property type="gene ID" value="Os07g0214300"/>
</dbReference>
<dbReference type="KEGG" id="dosa:Os07g0214300"/>
<dbReference type="eggNOG" id="ENOG502R43K">
    <property type="taxonomic scope" value="Eukaryota"/>
</dbReference>
<dbReference type="HOGENOM" id="CLU_140628_0_0_1"/>
<dbReference type="InParanoid" id="Q01882"/>
<dbReference type="OMA" id="DEWCICG"/>
<dbReference type="Proteomes" id="UP000000763">
    <property type="component" value="Chromosome 7"/>
</dbReference>
<dbReference type="Proteomes" id="UP000007752">
    <property type="component" value="Chromosome 7"/>
</dbReference>
<dbReference type="Proteomes" id="UP000059680">
    <property type="component" value="Chromosome 7"/>
</dbReference>
<dbReference type="GO" id="GO:0005576">
    <property type="term" value="C:extracellular region"/>
    <property type="evidence" value="ECO:0007669"/>
    <property type="project" value="UniProtKB-SubCell"/>
</dbReference>
<dbReference type="GO" id="GO:0019863">
    <property type="term" value="F:IgE binding"/>
    <property type="evidence" value="ECO:0000314"/>
    <property type="project" value="UniProtKB"/>
</dbReference>
<dbReference type="GO" id="GO:0004867">
    <property type="term" value="F:serine-type endopeptidase inhibitor activity"/>
    <property type="evidence" value="ECO:0000250"/>
    <property type="project" value="Gramene"/>
</dbReference>
<dbReference type="CDD" id="cd00261">
    <property type="entry name" value="AAI_SS"/>
    <property type="match status" value="1"/>
</dbReference>
<dbReference type="FunFam" id="1.10.110.10:FF:000004">
    <property type="entry name" value="Alpha-amylase inhibitor 0.19"/>
    <property type="match status" value="1"/>
</dbReference>
<dbReference type="Gene3D" id="1.10.110.10">
    <property type="entry name" value="Plant lipid-transfer and hydrophobic proteins"/>
    <property type="match status" value="1"/>
</dbReference>
<dbReference type="InterPro" id="IPR002411">
    <property type="entry name" value="Allergen/amylase_inhib_rice"/>
</dbReference>
<dbReference type="InterPro" id="IPR006106">
    <property type="entry name" value="Allergen/soft/tryp_amyl_inhib"/>
</dbReference>
<dbReference type="InterPro" id="IPR006105">
    <property type="entry name" value="Allergen/tryp_amyl_inhib_CS"/>
</dbReference>
<dbReference type="InterPro" id="IPR036312">
    <property type="entry name" value="Bifun_inhib/LTP/seed_sf"/>
</dbReference>
<dbReference type="InterPro" id="IPR016140">
    <property type="entry name" value="Bifunc_inhib/LTP/seed_store"/>
</dbReference>
<dbReference type="PANTHER" id="PTHR34481:SF8">
    <property type="entry name" value="SEED ALLERGENIC PROTEIN RAG1"/>
    <property type="match status" value="1"/>
</dbReference>
<dbReference type="PANTHER" id="PTHR34481">
    <property type="entry name" value="TRYPSIN/FACTOR XIIA INHIBITOR-RELATED"/>
    <property type="match status" value="1"/>
</dbReference>
<dbReference type="Pfam" id="PF00234">
    <property type="entry name" value="Tryp_alpha_amyl"/>
    <property type="match status" value="1"/>
</dbReference>
<dbReference type="PIRSF" id="PIRSF001657">
    <property type="entry name" value="Allergen/amylase_inhib"/>
    <property type="match status" value="1"/>
</dbReference>
<dbReference type="PRINTS" id="PR00808">
    <property type="entry name" value="AMLASEINHBTR"/>
</dbReference>
<dbReference type="PRINTS" id="PR00809">
    <property type="entry name" value="RAGALLERGEN"/>
</dbReference>
<dbReference type="SMART" id="SM00499">
    <property type="entry name" value="AAI"/>
    <property type="match status" value="1"/>
</dbReference>
<dbReference type="SUPFAM" id="SSF47699">
    <property type="entry name" value="Bifunctional inhibitor/lipid-transfer protein/seed storage 2S albumin"/>
    <property type="match status" value="1"/>
</dbReference>
<dbReference type="PROSITE" id="PS00426">
    <property type="entry name" value="CEREAL_TRYP_AMYL_INH"/>
    <property type="match status" value="1"/>
</dbReference>
<keyword id="KW-0020">Allergen</keyword>
<keyword id="KW-1015">Disulfide bond</keyword>
<keyword id="KW-0325">Glycoprotein</keyword>
<keyword id="KW-1185">Reference proteome</keyword>
<keyword id="KW-0964">Secreted</keyword>
<keyword id="KW-0732">Signal</keyword>